<reference key="1">
    <citation type="journal article" date="1992" name="Biochemistry">
        <title>DNA sequence of the yeast transketolase gene.</title>
        <authorList>
            <person name="Fletcher T.S."/>
            <person name="Kwee I.L."/>
            <person name="Nakada T."/>
            <person name="Largman C."/>
            <person name="Martin B.M."/>
        </authorList>
    </citation>
    <scope>NUCLEOTIDE SEQUENCE [GENOMIC DNA]</scope>
    <scope>PARTIAL PROTEIN SEQUENCE</scope>
</reference>
<reference key="2">
    <citation type="journal article" date="1993" name="J. Biol. Chem.">
        <title>Yeast TKL1 gene encodes a transketolase that is required for efficient glycolysis and biosynthesis of aromatic amino acids.</title>
        <authorList>
            <person name="Sundstroem M."/>
            <person name="Lindqvist Y."/>
            <person name="Schneider G."/>
            <person name="Hellman U."/>
            <person name="Ronne H."/>
        </authorList>
    </citation>
    <scope>NUCLEOTIDE SEQUENCE [GENOMIC DNA]</scope>
    <source>
        <strain>ATCC 208353 / W303-1A</strain>
    </source>
</reference>
<reference key="3">
    <citation type="journal article" date="1997" name="Nature">
        <title>The nucleotide sequence of Saccharomyces cerevisiae chromosome XVI.</title>
        <authorList>
            <person name="Bussey H."/>
            <person name="Storms R.K."/>
            <person name="Ahmed A."/>
            <person name="Albermann K."/>
            <person name="Allen E."/>
            <person name="Ansorge W."/>
            <person name="Araujo R."/>
            <person name="Aparicio A."/>
            <person name="Barrell B.G."/>
            <person name="Badcock K."/>
            <person name="Benes V."/>
            <person name="Botstein D."/>
            <person name="Bowman S."/>
            <person name="Brueckner M."/>
            <person name="Carpenter J."/>
            <person name="Cherry J.M."/>
            <person name="Chung E."/>
            <person name="Churcher C.M."/>
            <person name="Coster F."/>
            <person name="Davis K."/>
            <person name="Davis R.W."/>
            <person name="Dietrich F.S."/>
            <person name="Delius H."/>
            <person name="DiPaolo T."/>
            <person name="Dubois E."/>
            <person name="Duesterhoeft A."/>
            <person name="Duncan M."/>
            <person name="Floeth M."/>
            <person name="Fortin N."/>
            <person name="Friesen J.D."/>
            <person name="Fritz C."/>
            <person name="Goffeau A."/>
            <person name="Hall J."/>
            <person name="Hebling U."/>
            <person name="Heumann K."/>
            <person name="Hilbert H."/>
            <person name="Hillier L.W."/>
            <person name="Hunicke-Smith S."/>
            <person name="Hyman R.W."/>
            <person name="Johnston M."/>
            <person name="Kalman S."/>
            <person name="Kleine K."/>
            <person name="Komp C."/>
            <person name="Kurdi O."/>
            <person name="Lashkari D."/>
            <person name="Lew H."/>
            <person name="Lin A."/>
            <person name="Lin D."/>
            <person name="Louis E.J."/>
            <person name="Marathe R."/>
            <person name="Messenguy F."/>
            <person name="Mewes H.-W."/>
            <person name="Mirtipati S."/>
            <person name="Moestl D."/>
            <person name="Mueller-Auer S."/>
            <person name="Namath A."/>
            <person name="Nentwich U."/>
            <person name="Oefner P."/>
            <person name="Pearson D."/>
            <person name="Petel F.X."/>
            <person name="Pohl T.M."/>
            <person name="Purnelle B."/>
            <person name="Rajandream M.A."/>
            <person name="Rechmann S."/>
            <person name="Rieger M."/>
            <person name="Riles L."/>
            <person name="Roberts D."/>
            <person name="Schaefer M."/>
            <person name="Scharfe M."/>
            <person name="Scherens B."/>
            <person name="Schramm S."/>
            <person name="Schroeder M."/>
            <person name="Sdicu A.-M."/>
            <person name="Tettelin H."/>
            <person name="Urrestarazu L.A."/>
            <person name="Ushinsky S."/>
            <person name="Vierendeels F."/>
            <person name="Vissers S."/>
            <person name="Voss H."/>
            <person name="Walsh S.V."/>
            <person name="Wambutt R."/>
            <person name="Wang Y."/>
            <person name="Wedler E."/>
            <person name="Wedler H."/>
            <person name="Winnett E."/>
            <person name="Zhong W.-W."/>
            <person name="Zollner A."/>
            <person name="Vo D.H."/>
            <person name="Hani J."/>
        </authorList>
    </citation>
    <scope>NUCLEOTIDE SEQUENCE [LARGE SCALE GENOMIC DNA]</scope>
    <source>
        <strain>ATCC 204508 / S288c</strain>
    </source>
</reference>
<reference key="4">
    <citation type="journal article" date="2014" name="G3 (Bethesda)">
        <title>The reference genome sequence of Saccharomyces cerevisiae: Then and now.</title>
        <authorList>
            <person name="Engel S.R."/>
            <person name="Dietrich F.S."/>
            <person name="Fisk D.G."/>
            <person name="Binkley G."/>
            <person name="Balakrishnan R."/>
            <person name="Costanzo M.C."/>
            <person name="Dwight S.S."/>
            <person name="Hitz B.C."/>
            <person name="Karra K."/>
            <person name="Nash R.S."/>
            <person name="Weng S."/>
            <person name="Wong E.D."/>
            <person name="Lloyd P."/>
            <person name="Skrzypek M.S."/>
            <person name="Miyasato S.R."/>
            <person name="Simison M."/>
            <person name="Cherry J.M."/>
        </authorList>
    </citation>
    <scope>GENOME REANNOTATION</scope>
    <source>
        <strain>ATCC 204508 / S288c</strain>
    </source>
</reference>
<reference key="5">
    <citation type="journal article" date="1991" name="Protein Seq. Data Anal.">
        <title>The N-terminal amino acid sequence of yeast transketolase.</title>
        <authorList>
            <person name="Nixon P.F."/>
            <person name="Duggleby R.G."/>
        </authorList>
    </citation>
    <scope>PROTEIN SEQUENCE OF 2-36</scope>
</reference>
<reference key="6">
    <citation type="journal article" date="1995" name="Eur. J. Biochem.">
        <title>His103 in yeast transketolase is required for substrate recognition and catalysis.</title>
        <authorList>
            <person name="Wikner C."/>
            <person name="Meshalnika L."/>
            <person name="Nilsson U."/>
            <person name="Baeckstroem S."/>
            <person name="Lindqvist Y."/>
            <person name="Schneider G."/>
        </authorList>
    </citation>
    <scope>MUTAGENESIS OF HIS-103</scope>
    <scope>FUNCTION</scope>
    <scope>CATALYTIC ACTIVITY</scope>
</reference>
<reference key="7">
    <citation type="journal article" date="1997" name="Eur. J. Biochem.">
        <title>Examination of the thiamin diphosphate binding site in yeast transketolase by site-directed mutagenesis.</title>
        <authorList>
            <person name="Meshalkina L."/>
            <person name="Nilsson U."/>
            <person name="Wikner C."/>
            <person name="Kostikowa T."/>
            <person name="Schneider G."/>
        </authorList>
    </citation>
    <scope>MUTAGENESIS OF GLU-162 AND ASP-382</scope>
</reference>
<reference key="8">
    <citation type="journal article" date="2003" name="Nature">
        <title>Global analysis of protein expression in yeast.</title>
        <authorList>
            <person name="Ghaemmaghami S."/>
            <person name="Huh W.-K."/>
            <person name="Bower K."/>
            <person name="Howson R.W."/>
            <person name="Belle A."/>
            <person name="Dephoure N."/>
            <person name="O'Shea E.K."/>
            <person name="Weissman J.S."/>
        </authorList>
    </citation>
    <scope>LEVEL OF PROTEIN EXPRESSION [LARGE SCALE ANALYSIS]</scope>
</reference>
<reference key="9">
    <citation type="journal article" date="2007" name="J. Proteome Res.">
        <title>Large-scale phosphorylation analysis of alpha-factor-arrested Saccharomyces cerevisiae.</title>
        <authorList>
            <person name="Li X."/>
            <person name="Gerber S.A."/>
            <person name="Rudner A.D."/>
            <person name="Beausoleil S.A."/>
            <person name="Haas W."/>
            <person name="Villen J."/>
            <person name="Elias J.E."/>
            <person name="Gygi S.P."/>
        </authorList>
    </citation>
    <scope>PHOSPHORYLATION [LARGE SCALE ANALYSIS] AT SER-335</scope>
    <scope>IDENTIFICATION BY MASS SPECTROMETRY [LARGE SCALE ANALYSIS]</scope>
    <source>
        <strain>ADR376</strain>
    </source>
</reference>
<reference key="10">
    <citation type="journal article" date="2008" name="Mol. Cell. Proteomics">
        <title>A multidimensional chromatography technology for in-depth phosphoproteome analysis.</title>
        <authorList>
            <person name="Albuquerque C.P."/>
            <person name="Smolka M.B."/>
            <person name="Payne S.H."/>
            <person name="Bafna V."/>
            <person name="Eng J."/>
            <person name="Zhou H."/>
        </authorList>
    </citation>
    <scope>PHOSPHORYLATION [LARGE SCALE ANALYSIS] AT SER-335; SER-402 AND SER-492</scope>
    <scope>IDENTIFICATION BY MASS SPECTROMETRY [LARGE SCALE ANALYSIS]</scope>
</reference>
<reference key="11">
    <citation type="journal article" date="2008" name="Proteins">
        <title>Effect of bivalent cations on the interaction of transketolase with its donor substrate.</title>
        <authorList>
            <person name="Sevostyanova I.A."/>
            <person name="Yurshev V.A."/>
            <person name="Solovjeva O.N."/>
            <person name="Zabrodskaya S.V."/>
            <person name="Kochetov G.A."/>
        </authorList>
    </citation>
    <scope>COFACTOR</scope>
</reference>
<reference key="12">
    <citation type="journal article" date="2009" name="Science">
        <title>Global analysis of Cdk1 substrate phosphorylation sites provides insights into evolution.</title>
        <authorList>
            <person name="Holt L.J."/>
            <person name="Tuch B.B."/>
            <person name="Villen J."/>
            <person name="Johnson A.D."/>
            <person name="Gygi S.P."/>
            <person name="Morgan D.O."/>
        </authorList>
    </citation>
    <scope>PHOSPHORYLATION [LARGE SCALE ANALYSIS] AT SER-286 AND SER-335</scope>
    <scope>IDENTIFICATION BY MASS SPECTROMETRY [LARGE SCALE ANALYSIS]</scope>
</reference>
<reference key="13">
    <citation type="journal article" date="2012" name="Proc. Natl. Acad. Sci. U.S.A.">
        <title>N-terminal acetylome analyses and functional insights of the N-terminal acetyltransferase NatB.</title>
        <authorList>
            <person name="Van Damme P."/>
            <person name="Lasa M."/>
            <person name="Polevoda B."/>
            <person name="Gazquez C."/>
            <person name="Elosegui-Artola A."/>
            <person name="Kim D.S."/>
            <person name="De Juan-Pardo E."/>
            <person name="Demeyer K."/>
            <person name="Hole K."/>
            <person name="Larrea E."/>
            <person name="Timmerman E."/>
            <person name="Prieto J."/>
            <person name="Arnesen T."/>
            <person name="Sherman F."/>
            <person name="Gevaert K."/>
            <person name="Aldabe R."/>
        </authorList>
    </citation>
    <scope>IDENTIFICATION BY MASS SPECTROMETRY [LARGE SCALE ANALYSIS]</scope>
</reference>
<reference key="14">
    <citation type="journal article" date="2012" name="Proteomics">
        <title>Sites of ubiquitin attachment in Saccharomyces cerevisiae.</title>
        <authorList>
            <person name="Starita L.M."/>
            <person name="Lo R.S."/>
            <person name="Eng J.K."/>
            <person name="von Haller P.D."/>
            <person name="Fields S."/>
        </authorList>
    </citation>
    <scope>UBIQUITINATION [LARGE SCALE ANALYSIS] AT LYS-647</scope>
    <scope>IDENTIFICATION BY MASS SPECTROMETRY [LARGE SCALE ANALYSIS]</scope>
</reference>
<reference key="15">
    <citation type="journal article" date="1992" name="EMBO J.">
        <title>Three-dimensional structure of transketolase, a thiamine diphosphate dependent enzyme, at 2.5-A resolution.</title>
        <authorList>
            <person name="Lindqvist Y."/>
            <person name="Schneider G."/>
            <person name="Ermler U."/>
            <person name="Sundstroem M."/>
        </authorList>
    </citation>
    <scope>X-RAY CRYSTALLOGRAPHY (2.5 ANGSTROMS)</scope>
</reference>
<reference key="16">
    <citation type="journal article" date="1994" name="J. Biol. Chem.">
        <title>Specificity of coenzyme binding in thiamin diphosphate-dependent enzymes. Crystal structures of yeast transketolase in complex with analogs of thiamin diphosphate.</title>
        <authorList>
            <person name="Konig S."/>
            <person name="Schellenberger A."/>
            <person name="Neef H."/>
            <person name="Schneider G."/>
        </authorList>
    </citation>
    <scope>X-RAY CRYSTALLOGRAPHY (2.30 ANGSTROMS) OF 3-679 IN COMPLEX WITH CALCIUM AND THIAMINE PYROPHOSPHATE ANALOGS</scope>
    <scope>CATALYTIC ACTIVITY</scope>
</reference>
<reference key="17">
    <citation type="journal article" date="1994" name="J. Mol. Biol.">
        <title>Refined structure of transketolase from Saccharomyces cerevisiae at 2.0-A resolution.</title>
        <authorList>
            <person name="Nikkola M."/>
            <person name="Lindqvist Y."/>
            <person name="Schneider G."/>
        </authorList>
    </citation>
    <scope>X-RAY CRYSTALLOGRAPHY (2.00 ANGSTROMS) IN COMPLEX WITH CALCIUM AND THIAMINE PYROPHOSPHATE</scope>
</reference>
<reference key="18">
    <citation type="journal article" date="1997" name="Biochemistry">
        <title>Identification of catalytically important residues in yeast transketolase.</title>
        <authorList>
            <person name="Wikner C."/>
            <person name="Nilsson U."/>
            <person name="Meshalkina L."/>
            <person name="Udekwu C."/>
            <person name="Lindqvist Y."/>
            <person name="Schneider G."/>
        </authorList>
    </citation>
    <scope>X-RAY CRYSTALLOGRAPHY (2.6 ANGSTROMS) IN COMPLEX WITH CALCIUM AND THIAMINE PYROPHOSPHATE</scope>
    <scope>MUTAGENESIS OF HIS-30; HIS-69; HIS-103; HIS-263 AND HIS-481</scope>
</reference>
<reference key="19">
    <citation type="journal article" date="1997" name="J. Biol. Chem.">
        <title>Examination of substrate binding in thiamin diphosphate-dependent transketolase by protein crystallography and site-directed mutagenesis.</title>
        <authorList>
            <person name="Nilsson U."/>
            <person name="Meshalkina L."/>
            <person name="Lindqvist Y."/>
            <person name="Schneider G."/>
        </authorList>
    </citation>
    <scope>X-RAY CRYSTALLOGRAPHY (2.40 ANGSTROMS) OF 2-679 IN COMPLEX WITH CALCIUM; D-ERYTHROSE 4-PHOSPHATE AND THIAMINE PYROPHOSPHATE</scope>
    <scope>CATALYTIC ACTIVITY</scope>
    <scope>MUTAGENESIS OF ARG-359; HIS-469; ASP-477 AND ARG-528</scope>
</reference>
<reference key="20">
    <citation type="journal article" date="2002" name="Proc. Natl. Acad. Sci. U.S.A.">
        <title>Snapshot of a key intermediate in enzymatic thiamin catalysis: crystal structure of the alpha-carbanion of (alpha,beta-dihydroxyethyl)-thiamin diphosphate in the active site of transketolase from Saccharomyces cerevisiae.</title>
        <authorList>
            <person name="Fiedler E."/>
            <person name="Thorell S."/>
            <person name="Sandalova T."/>
            <person name="Golbik R."/>
            <person name="Konig S."/>
            <person name="Schneider G."/>
        </authorList>
    </citation>
    <scope>X-RAY CRYSTALLOGRAPHY (1.86 ANGSTROMS) OF 2-679 IN COMPLEX WITH REACTION INTERMEDIATE</scope>
</reference>
<dbReference type="EC" id="2.2.1.1"/>
<dbReference type="EMBL" id="M63302">
    <property type="protein sequence ID" value="AAA35168.1"/>
    <property type="molecule type" value="Genomic_DNA"/>
</dbReference>
<dbReference type="EMBL" id="X73224">
    <property type="protein sequence ID" value="CAA51693.1"/>
    <property type="molecule type" value="Genomic_DNA"/>
</dbReference>
<dbReference type="EMBL" id="Z49219">
    <property type="protein sequence ID" value="CAA89191.1"/>
    <property type="molecule type" value="Genomic_DNA"/>
</dbReference>
<dbReference type="EMBL" id="Z71255">
    <property type="protein sequence ID" value="CAA94982.1"/>
    <property type="molecule type" value="Genomic_DNA"/>
</dbReference>
<dbReference type="EMBL" id="U51033">
    <property type="protein sequence ID" value="AAB68125.1"/>
    <property type="molecule type" value="Genomic_DNA"/>
</dbReference>
<dbReference type="EMBL" id="BK006949">
    <property type="protein sequence ID" value="DAA11494.1"/>
    <property type="molecule type" value="Genomic_DNA"/>
</dbReference>
<dbReference type="PIR" id="A49510">
    <property type="entry name" value="XJBYTK"/>
</dbReference>
<dbReference type="RefSeq" id="NP_015399.1">
    <property type="nucleotide sequence ID" value="NM_001184171.1"/>
</dbReference>
<dbReference type="PDB" id="1AY0">
    <property type="method" value="X-ray"/>
    <property type="resolution" value="2.60 A"/>
    <property type="chains" value="A/B=1-680"/>
</dbReference>
<dbReference type="PDB" id="1GPU">
    <property type="method" value="X-ray"/>
    <property type="resolution" value="1.86 A"/>
    <property type="chains" value="A/B=1-680"/>
</dbReference>
<dbReference type="PDB" id="1NGS">
    <property type="method" value="X-ray"/>
    <property type="resolution" value="2.40 A"/>
    <property type="chains" value="A/B=1-680"/>
</dbReference>
<dbReference type="PDB" id="1TKA">
    <property type="method" value="X-ray"/>
    <property type="resolution" value="2.70 A"/>
    <property type="chains" value="A/B=3-680"/>
</dbReference>
<dbReference type="PDB" id="1TKB">
    <property type="method" value="X-ray"/>
    <property type="resolution" value="2.30 A"/>
    <property type="chains" value="A/B=3-680"/>
</dbReference>
<dbReference type="PDB" id="1TKC">
    <property type="method" value="X-ray"/>
    <property type="resolution" value="2.70 A"/>
    <property type="chains" value="A/B=3-680"/>
</dbReference>
<dbReference type="PDB" id="1TRK">
    <property type="method" value="X-ray"/>
    <property type="resolution" value="2.00 A"/>
    <property type="chains" value="A/B=1-680"/>
</dbReference>
<dbReference type="PDBsum" id="1AY0"/>
<dbReference type="PDBsum" id="1GPU"/>
<dbReference type="PDBsum" id="1NGS"/>
<dbReference type="PDBsum" id="1TKA"/>
<dbReference type="PDBsum" id="1TKB"/>
<dbReference type="PDBsum" id="1TKC"/>
<dbReference type="PDBsum" id="1TRK"/>
<dbReference type="SMR" id="P23254"/>
<dbReference type="BioGRID" id="36247">
    <property type="interactions" value="249"/>
</dbReference>
<dbReference type="DIP" id="DIP-6765N"/>
<dbReference type="FunCoup" id="P23254">
    <property type="interactions" value="949"/>
</dbReference>
<dbReference type="IntAct" id="P23254">
    <property type="interactions" value="34"/>
</dbReference>
<dbReference type="MINT" id="P23254"/>
<dbReference type="STRING" id="4932.YPR074C"/>
<dbReference type="iPTMnet" id="P23254"/>
<dbReference type="PaxDb" id="4932-YPR074C"/>
<dbReference type="PeptideAtlas" id="P23254"/>
<dbReference type="TopDownProteomics" id="P23254"/>
<dbReference type="EnsemblFungi" id="YPR074C_mRNA">
    <property type="protein sequence ID" value="YPR074C"/>
    <property type="gene ID" value="YPR074C"/>
</dbReference>
<dbReference type="GeneID" id="856188"/>
<dbReference type="KEGG" id="sce:YPR074C"/>
<dbReference type="AGR" id="SGD:S000006278"/>
<dbReference type="SGD" id="S000006278">
    <property type="gene designation" value="TKL1"/>
</dbReference>
<dbReference type="VEuPathDB" id="FungiDB:YPR074C"/>
<dbReference type="eggNOG" id="KOG0523">
    <property type="taxonomic scope" value="Eukaryota"/>
</dbReference>
<dbReference type="GeneTree" id="ENSGT00940000176704"/>
<dbReference type="HOGENOM" id="CLU_009227_0_0_1"/>
<dbReference type="InParanoid" id="P23254"/>
<dbReference type="OMA" id="ADYMRGS"/>
<dbReference type="OrthoDB" id="10267175at2759"/>
<dbReference type="BioCyc" id="YEAST:YPR074C-MONOMER"/>
<dbReference type="BRENDA" id="2.2.1.1">
    <property type="organism ID" value="984"/>
</dbReference>
<dbReference type="SABIO-RK" id="P23254"/>
<dbReference type="BioGRID-ORCS" id="856188">
    <property type="hits" value="8 hits in 10 CRISPR screens"/>
</dbReference>
<dbReference type="EvolutionaryTrace" id="P23254"/>
<dbReference type="PRO" id="PR:P23254"/>
<dbReference type="Proteomes" id="UP000002311">
    <property type="component" value="Chromosome XVI"/>
</dbReference>
<dbReference type="RNAct" id="P23254">
    <property type="molecule type" value="protein"/>
</dbReference>
<dbReference type="GO" id="GO:0005737">
    <property type="term" value="C:cytoplasm"/>
    <property type="evidence" value="ECO:0000305"/>
    <property type="project" value="SGD"/>
</dbReference>
<dbReference type="GO" id="GO:0005829">
    <property type="term" value="C:cytosol"/>
    <property type="evidence" value="ECO:0000318"/>
    <property type="project" value="GO_Central"/>
</dbReference>
<dbReference type="GO" id="GO:0046872">
    <property type="term" value="F:metal ion binding"/>
    <property type="evidence" value="ECO:0007669"/>
    <property type="project" value="UniProtKB-KW"/>
</dbReference>
<dbReference type="GO" id="GO:0004802">
    <property type="term" value="F:transketolase activity"/>
    <property type="evidence" value="ECO:0000315"/>
    <property type="project" value="SGD"/>
</dbReference>
<dbReference type="GO" id="GO:0006098">
    <property type="term" value="P:pentose-phosphate shunt"/>
    <property type="evidence" value="ECO:0000315"/>
    <property type="project" value="SGD"/>
</dbReference>
<dbReference type="CDD" id="cd07033">
    <property type="entry name" value="TPP_PYR_DXS_TK_like"/>
    <property type="match status" value="1"/>
</dbReference>
<dbReference type="CDD" id="cd02012">
    <property type="entry name" value="TPP_TK"/>
    <property type="match status" value="1"/>
</dbReference>
<dbReference type="FunFam" id="3.40.50.920:FF:000003">
    <property type="entry name" value="Transketolase"/>
    <property type="match status" value="1"/>
</dbReference>
<dbReference type="FunFam" id="3.40.50.970:FF:000003">
    <property type="entry name" value="Transketolase"/>
    <property type="match status" value="1"/>
</dbReference>
<dbReference type="FunFam" id="3.40.50.970:FF:000004">
    <property type="entry name" value="Transketolase"/>
    <property type="match status" value="1"/>
</dbReference>
<dbReference type="Gene3D" id="3.40.50.920">
    <property type="match status" value="1"/>
</dbReference>
<dbReference type="Gene3D" id="3.40.50.970">
    <property type="match status" value="2"/>
</dbReference>
<dbReference type="InterPro" id="IPR029061">
    <property type="entry name" value="THDP-binding"/>
</dbReference>
<dbReference type="InterPro" id="IPR009014">
    <property type="entry name" value="Transketo_C/PFOR_II"/>
</dbReference>
<dbReference type="InterPro" id="IPR055152">
    <property type="entry name" value="Transketolase-like_C_2"/>
</dbReference>
<dbReference type="InterPro" id="IPR005475">
    <property type="entry name" value="Transketolase-like_Pyr-bd"/>
</dbReference>
<dbReference type="InterPro" id="IPR005478">
    <property type="entry name" value="Transketolase_bac-like"/>
</dbReference>
<dbReference type="InterPro" id="IPR020826">
    <property type="entry name" value="Transketolase_BS"/>
</dbReference>
<dbReference type="InterPro" id="IPR049557">
    <property type="entry name" value="Transketolase_CS"/>
</dbReference>
<dbReference type="InterPro" id="IPR033247">
    <property type="entry name" value="Transketolase_fam"/>
</dbReference>
<dbReference type="InterPro" id="IPR005474">
    <property type="entry name" value="Transketolase_N"/>
</dbReference>
<dbReference type="NCBIfam" id="TIGR00232">
    <property type="entry name" value="tktlase_bact"/>
    <property type="match status" value="1"/>
</dbReference>
<dbReference type="PANTHER" id="PTHR43522">
    <property type="entry name" value="TRANSKETOLASE"/>
    <property type="match status" value="1"/>
</dbReference>
<dbReference type="PANTHER" id="PTHR43522:SF2">
    <property type="entry name" value="TRANSKETOLASE 1-RELATED"/>
    <property type="match status" value="1"/>
</dbReference>
<dbReference type="Pfam" id="PF02779">
    <property type="entry name" value="Transket_pyr"/>
    <property type="match status" value="1"/>
</dbReference>
<dbReference type="Pfam" id="PF22613">
    <property type="entry name" value="Transketolase_C_1"/>
    <property type="match status" value="1"/>
</dbReference>
<dbReference type="Pfam" id="PF00456">
    <property type="entry name" value="Transketolase_N"/>
    <property type="match status" value="1"/>
</dbReference>
<dbReference type="SMART" id="SM00861">
    <property type="entry name" value="Transket_pyr"/>
    <property type="match status" value="1"/>
</dbReference>
<dbReference type="SUPFAM" id="SSF52518">
    <property type="entry name" value="Thiamin diphosphate-binding fold (THDP-binding)"/>
    <property type="match status" value="2"/>
</dbReference>
<dbReference type="SUPFAM" id="SSF52922">
    <property type="entry name" value="TK C-terminal domain-like"/>
    <property type="match status" value="1"/>
</dbReference>
<dbReference type="PROSITE" id="PS00801">
    <property type="entry name" value="TRANSKETOLASE_1"/>
    <property type="match status" value="1"/>
</dbReference>
<dbReference type="PROSITE" id="PS00802">
    <property type="entry name" value="TRANSKETOLASE_2"/>
    <property type="match status" value="1"/>
</dbReference>
<proteinExistence type="evidence at protein level"/>
<name>TKT1_YEAST</name>
<protein>
    <recommendedName>
        <fullName>Transketolase 1</fullName>
        <shortName>TK 1</shortName>
        <ecNumber>2.2.1.1</ecNumber>
    </recommendedName>
</protein>
<evidence type="ECO:0000269" key="1">
    <source>
    </source>
</evidence>
<evidence type="ECO:0000269" key="2">
    <source>
    </source>
</evidence>
<evidence type="ECO:0000269" key="3">
    <source>
    </source>
</evidence>
<evidence type="ECO:0000269" key="4">
    <source>
    </source>
</evidence>
<evidence type="ECO:0000269" key="5">
    <source>
    </source>
</evidence>
<evidence type="ECO:0000269" key="6">
    <source>
    </source>
</evidence>
<evidence type="ECO:0000269" key="7">
    <source>
    </source>
</evidence>
<evidence type="ECO:0000269" key="8">
    <source>
    </source>
</evidence>
<evidence type="ECO:0000269" key="9">
    <source>
    </source>
</evidence>
<evidence type="ECO:0000269" key="10">
    <source>
    </source>
</evidence>
<evidence type="ECO:0000305" key="11"/>
<evidence type="ECO:0007744" key="12">
    <source>
    </source>
</evidence>
<evidence type="ECO:0007744" key="13">
    <source>
    </source>
</evidence>
<evidence type="ECO:0007744" key="14">
    <source>
    </source>
</evidence>
<evidence type="ECO:0007744" key="15">
    <source>
    </source>
</evidence>
<evidence type="ECO:0007829" key="16">
    <source>
        <dbReference type="PDB" id="1GPU"/>
    </source>
</evidence>
<evidence type="ECO:0007829" key="17">
    <source>
        <dbReference type="PDB" id="1TKB"/>
    </source>
</evidence>
<evidence type="ECO:0007829" key="18">
    <source>
        <dbReference type="PDB" id="1TRK"/>
    </source>
</evidence>
<feature type="initiator methionine" description="Removed" evidence="3">
    <location>
        <position position="1"/>
    </location>
</feature>
<feature type="chain" id="PRO_0000191904" description="Transketolase 1">
    <location>
        <begin position="2"/>
        <end position="680"/>
    </location>
</feature>
<feature type="active site" description="Proton donor" evidence="11">
    <location>
        <position position="418"/>
    </location>
</feature>
<feature type="binding site">
    <location>
        <position position="30"/>
    </location>
    <ligand>
        <name>substrate</name>
    </ligand>
</feature>
<feature type="binding site" evidence="6 8 10">
    <location>
        <position position="69"/>
    </location>
    <ligand>
        <name>thiamine diphosphate</name>
        <dbReference type="ChEBI" id="CHEBI:58937"/>
    </ligand>
</feature>
<feature type="binding site" evidence="6 8 10">
    <location>
        <begin position="116"/>
        <end position="118"/>
    </location>
    <ligand>
        <name>thiamine diphosphate</name>
        <dbReference type="ChEBI" id="CHEBI:58937"/>
    </ligand>
</feature>
<feature type="binding site">
    <location>
        <position position="157"/>
    </location>
    <ligand>
        <name>Mg(2+)</name>
        <dbReference type="ChEBI" id="CHEBI:18420"/>
    </ligand>
</feature>
<feature type="binding site" evidence="6 8 10">
    <location>
        <position position="158"/>
    </location>
    <ligand>
        <name>thiamine diphosphate</name>
        <dbReference type="ChEBI" id="CHEBI:58937"/>
    </ligand>
</feature>
<feature type="binding site">
    <location>
        <position position="187"/>
    </location>
    <ligand>
        <name>Mg(2+)</name>
        <dbReference type="ChEBI" id="CHEBI:18420"/>
    </ligand>
</feature>
<feature type="binding site" evidence="6 8 10">
    <location>
        <position position="187"/>
    </location>
    <ligand>
        <name>thiamine diphosphate</name>
        <dbReference type="ChEBI" id="CHEBI:58937"/>
    </ligand>
</feature>
<feature type="binding site">
    <location>
        <position position="189"/>
    </location>
    <ligand>
        <name>Mg(2+)</name>
        <dbReference type="ChEBI" id="CHEBI:18420"/>
    </ligand>
</feature>
<feature type="binding site">
    <location>
        <position position="263"/>
    </location>
    <ligand>
        <name>substrate</name>
    </ligand>
</feature>
<feature type="binding site" evidence="6 8 10">
    <location>
        <position position="263"/>
    </location>
    <ligand>
        <name>thiamine diphosphate</name>
        <dbReference type="ChEBI" id="CHEBI:58937"/>
    </ligand>
</feature>
<feature type="binding site">
    <location>
        <position position="359"/>
    </location>
    <ligand>
        <name>substrate</name>
    </ligand>
</feature>
<feature type="binding site">
    <location>
        <position position="386"/>
    </location>
    <ligand>
        <name>substrate</name>
    </ligand>
</feature>
<feature type="binding site" evidence="6 8 10">
    <location>
        <position position="418"/>
    </location>
    <ligand>
        <name>thiamine diphosphate</name>
        <dbReference type="ChEBI" id="CHEBI:58937"/>
    </ligand>
</feature>
<feature type="binding site" evidence="6 8 10">
    <location>
        <position position="445"/>
    </location>
    <ligand>
        <name>thiamine diphosphate</name>
        <dbReference type="ChEBI" id="CHEBI:58937"/>
    </ligand>
</feature>
<feature type="binding site">
    <location>
        <position position="469"/>
    </location>
    <ligand>
        <name>substrate</name>
    </ligand>
</feature>
<feature type="binding site">
    <location>
        <position position="477"/>
    </location>
    <ligand>
        <name>substrate</name>
    </ligand>
</feature>
<feature type="binding site">
    <location>
        <position position="528"/>
    </location>
    <ligand>
        <name>substrate</name>
    </ligand>
</feature>
<feature type="site" description="Important for catalytic activity" evidence="10">
    <location>
        <position position="30"/>
    </location>
</feature>
<feature type="site" description="Important for catalytic activity" evidence="10">
    <location>
        <position position="263"/>
    </location>
</feature>
<feature type="modified residue" description="Phosphoserine" evidence="14">
    <location>
        <position position="286"/>
    </location>
</feature>
<feature type="modified residue" description="Phosphoserine" evidence="12 13 14">
    <location>
        <position position="335"/>
    </location>
</feature>
<feature type="modified residue" description="Phosphoserine" evidence="13">
    <location>
        <position position="402"/>
    </location>
</feature>
<feature type="modified residue" description="Phosphoserine" evidence="13">
    <location>
        <position position="492"/>
    </location>
</feature>
<feature type="cross-link" description="Glycyl lysine isopeptide (Lys-Gly) (interchain with G-Cter in ubiquitin)" evidence="15">
    <location>
        <position position="647"/>
    </location>
</feature>
<feature type="mutagenesis site" description="Strongly reduced catalytic activity. Decreases affinity for xylulose 5-phosphate about 15 times." evidence="10">
    <original>H</original>
    <variation>A</variation>
    <variation>Q</variation>
    <location>
        <position position="30"/>
    </location>
</feature>
<feature type="mutagenesis site" description="Loss of activity." evidence="10">
    <original>H</original>
    <variation>N</variation>
    <location>
        <position position="30"/>
    </location>
</feature>
<feature type="mutagenesis site" description="Reduces catalytic activity by about 98%. Decreased affinity for donor substrate." evidence="10">
    <original>H</original>
    <variation>A</variation>
    <location>
        <position position="69"/>
    </location>
</feature>
<feature type="mutagenesis site" description="Reduces activity by over 96% and decreases affinity for thiamine pyrophosphate and xylulose 5-phosphate." evidence="7 10">
    <original>H</original>
    <variation>A</variation>
    <variation>N</variation>
    <location>
        <position position="103"/>
    </location>
</feature>
<feature type="mutagenesis site" description="Loss of activity." evidence="7 10">
    <original>H</original>
    <variation>F</variation>
    <location>
        <position position="103"/>
    </location>
</feature>
<feature type="mutagenesis site" description="Most catalytic properties similar to wild-type." evidence="9">
    <original>E</original>
    <variation>A</variation>
    <variation>Q</variation>
    <location>
        <position position="162"/>
    </location>
</feature>
<feature type="mutagenesis site" description="Strongly reduced catalytic activity." evidence="10">
    <original>H</original>
    <variation>A</variation>
    <location>
        <position position="263"/>
    </location>
</feature>
<feature type="mutagenesis site" description="Slightly reduced affinity for xylulose 5-phosphate and strongly reduced affinity for ribose 5-phosphate." evidence="8">
    <original>R</original>
    <variation>A</variation>
    <location>
        <position position="359"/>
    </location>
</feature>
<feature type="mutagenesis site" description="Severe loss of activity." evidence="9">
    <original>D</original>
    <variation>A</variation>
    <variation>R</variation>
    <location>
        <position position="382"/>
    </location>
</feature>
<feature type="mutagenesis site" description="Strongly reduced affinity for xylulose 5-phosphate and ribose 5-phosphate." evidence="8">
    <original>H</original>
    <variation>A</variation>
    <location>
        <position position="469"/>
    </location>
</feature>
<feature type="mutagenesis site" description="Strongly reduced catalytic activity. Strongly reduced affinity for xylulose 5-phosphate and ribose 5-phosphate." evidence="8">
    <original>D</original>
    <variation>A</variation>
    <location>
        <position position="477"/>
    </location>
</feature>
<feature type="mutagenesis site" description="Reduces catalytic activity by about 95%." evidence="10">
    <original>H</original>
    <variation>A</variation>
    <variation>Q</variation>
    <location>
        <position position="481"/>
    </location>
</feature>
<feature type="mutagenesis site" description="Reduced affinity for xylulose 5-phosphate and strongly reduced affinity for ribose 5-phosphate." evidence="8">
    <original>R</original>
    <variation>A</variation>
    <location>
        <position position="528"/>
    </location>
</feature>
<feature type="sequence conflict" description="In Ref. 1; AAA35168." evidence="11" ref="1">
    <original>MA</original>
    <variation>RS</variation>
    <location>
        <begin position="37"/>
        <end position="38"/>
    </location>
</feature>
<feature type="sequence conflict" description="In Ref. 1; AAA35168." evidence="11" ref="1">
    <original>WSQMRMNPTNPDWINRDRFVLSNGHAVALLYSM</original>
    <variation>GESNAHEPNQPKTGSTEIDLSCLTVTRSLCCIY</variation>
    <location>
        <begin position="45"/>
        <end position="77"/>
    </location>
</feature>
<feature type="sequence conflict" description="In Ref. 1; AAA35168." evidence="11" ref="1">
    <original>AATYNKPG</original>
    <variation>DMPLTTSRA</variation>
    <location>
        <begin position="136"/>
        <end position="143"/>
    </location>
</feature>
<feature type="sequence conflict" description="In Ref. 1; AAA35168." evidence="11" ref="1">
    <original>AQA</original>
    <variation>RQR</variation>
    <location>
        <begin position="232"/>
        <end position="234"/>
    </location>
</feature>
<feature type="sequence conflict" description="In Ref. 1; AA sequence." evidence="11" ref="1">
    <original>LIKMTTTIGYGSLHA</original>
    <variation>FDQNDHNHWLRFLRS</variation>
    <location>
        <begin position="243"/>
        <end position="257"/>
    </location>
</feature>
<feature type="sequence conflict" description="In Ref. 1; AA sequence." evidence="11" ref="1">
    <original>L</original>
    <variation>LVLPIL</variation>
    <location>
        <position position="383"/>
    </location>
</feature>
<feature type="sequence conflict" description="In Ref. 1; AAA35168." evidence="11" ref="1">
    <original>D</original>
    <variation>S</variation>
    <location>
        <position position="396"/>
    </location>
</feature>
<feature type="sequence conflict" description="In Ref. 1; AAA35168." evidence="11" ref="1">
    <original>RQNLPQLEGSS</original>
    <variation>PDKTCHNWKVAL</variation>
    <location>
        <begin position="528"/>
        <end position="538"/>
    </location>
</feature>
<feature type="sequence conflict" description="In Ref. 1; AAA35168." evidence="11" ref="1">
    <original>SGKAPEVFKFFGFTPEGVAERAQKTIAFYKGDKLISPLKKAF</original>
    <variation>PVRHQKSSSSSVSPQKVLLKELKRPLHSIRVTS</variation>
    <location>
        <begin position="639"/>
        <end position="680"/>
    </location>
</feature>
<feature type="helix" evidence="16">
    <location>
        <begin position="6"/>
        <end position="26"/>
    </location>
</feature>
<feature type="helix" evidence="16">
    <location>
        <begin position="32"/>
        <end position="46"/>
    </location>
</feature>
<feature type="strand" evidence="16">
    <location>
        <begin position="62"/>
        <end position="67"/>
    </location>
</feature>
<feature type="helix" evidence="16">
    <location>
        <begin position="68"/>
        <end position="70"/>
    </location>
</feature>
<feature type="helix" evidence="16">
    <location>
        <begin position="71"/>
        <end position="80"/>
    </location>
</feature>
<feature type="helix" evidence="16">
    <location>
        <begin position="87"/>
        <end position="90"/>
    </location>
</feature>
<feature type="turn" evidence="16">
    <location>
        <begin position="91"/>
        <end position="94"/>
    </location>
</feature>
<feature type="helix" evidence="16">
    <location>
        <begin position="120"/>
        <end position="139"/>
    </location>
</feature>
<feature type="strand" evidence="16">
    <location>
        <begin position="151"/>
        <end position="155"/>
    </location>
</feature>
<feature type="helix" evidence="16">
    <location>
        <begin position="157"/>
        <end position="161"/>
    </location>
</feature>
<feature type="helix" evidence="16">
    <location>
        <begin position="163"/>
        <end position="174"/>
    </location>
</feature>
<feature type="strand" evidence="16">
    <location>
        <begin position="180"/>
        <end position="186"/>
    </location>
</feature>
<feature type="strand" evidence="16">
    <location>
        <begin position="188"/>
        <end position="190"/>
    </location>
</feature>
<feature type="strand" evidence="17">
    <location>
        <begin position="191"/>
        <end position="194"/>
    </location>
</feature>
<feature type="helix" evidence="16">
    <location>
        <begin position="195"/>
        <end position="197"/>
    </location>
</feature>
<feature type="helix" evidence="16">
    <location>
        <begin position="203"/>
        <end position="210"/>
    </location>
</feature>
<feature type="strand" evidence="16">
    <location>
        <begin position="213"/>
        <end position="218"/>
    </location>
</feature>
<feature type="turn" evidence="16">
    <location>
        <begin position="220"/>
        <end position="222"/>
    </location>
</feature>
<feature type="helix" evidence="16">
    <location>
        <begin position="224"/>
        <end position="236"/>
    </location>
</feature>
<feature type="strand" evidence="16">
    <location>
        <begin position="242"/>
        <end position="247"/>
    </location>
</feature>
<feature type="turn" evidence="16">
    <location>
        <begin position="250"/>
        <end position="253"/>
    </location>
</feature>
<feature type="turn" evidence="16">
    <location>
        <begin position="255"/>
        <end position="258"/>
    </location>
</feature>
<feature type="helix" evidence="16">
    <location>
        <begin position="260"/>
        <end position="262"/>
    </location>
</feature>
<feature type="strand" evidence="16">
    <location>
        <begin position="263"/>
        <end position="265"/>
    </location>
</feature>
<feature type="helix" evidence="16">
    <location>
        <begin position="269"/>
        <end position="278"/>
    </location>
</feature>
<feature type="helix" evidence="16">
    <location>
        <begin position="291"/>
        <end position="300"/>
    </location>
</feature>
<feature type="helix" evidence="16">
    <location>
        <begin position="302"/>
        <end position="322"/>
    </location>
</feature>
<feature type="helix" evidence="16">
    <location>
        <begin position="324"/>
        <end position="334"/>
    </location>
</feature>
<feature type="helix" evidence="16">
    <location>
        <begin position="342"/>
        <end position="345"/>
    </location>
</feature>
<feature type="helix" evidence="16">
    <location>
        <begin position="358"/>
        <end position="369"/>
    </location>
</feature>
<feature type="turn" evidence="16">
    <location>
        <begin position="370"/>
        <end position="372"/>
    </location>
</feature>
<feature type="strand" evidence="16">
    <location>
        <begin position="376"/>
        <end position="382"/>
    </location>
</feature>
<feature type="helix" evidence="16">
    <location>
        <begin position="384"/>
        <end position="387"/>
    </location>
</feature>
<feature type="strand" evidence="16">
    <location>
        <begin position="402"/>
        <end position="406"/>
    </location>
</feature>
<feature type="strand" evidence="16">
    <location>
        <begin position="411"/>
        <end position="413"/>
    </location>
</feature>
<feature type="helix" evidence="16">
    <location>
        <begin position="418"/>
        <end position="431"/>
    </location>
</feature>
<feature type="strand" evidence="16">
    <location>
        <begin position="436"/>
        <end position="442"/>
    </location>
</feature>
<feature type="helix" evidence="16">
    <location>
        <begin position="443"/>
        <end position="446"/>
    </location>
</feature>
<feature type="helix" evidence="16">
    <location>
        <begin position="447"/>
        <end position="449"/>
    </location>
</feature>
<feature type="helix" evidence="16">
    <location>
        <begin position="450"/>
        <end position="459"/>
    </location>
</feature>
<feature type="strand" evidence="16">
    <location>
        <begin position="464"/>
        <end position="468"/>
    </location>
</feature>
<feature type="helix" evidence="16">
    <location>
        <begin position="472"/>
        <end position="474"/>
    </location>
</feature>
<feature type="turn" evidence="16">
    <location>
        <begin position="479"/>
        <end position="481"/>
    </location>
</feature>
<feature type="helix" evidence="16">
    <location>
        <begin position="486"/>
        <end position="491"/>
    </location>
</feature>
<feature type="strand" evidence="16">
    <location>
        <begin position="493"/>
        <end position="495"/>
    </location>
</feature>
<feature type="strand" evidence="16">
    <location>
        <begin position="497"/>
        <end position="499"/>
    </location>
</feature>
<feature type="helix" evidence="16">
    <location>
        <begin position="504"/>
        <end position="516"/>
    </location>
</feature>
<feature type="strand" evidence="16">
    <location>
        <begin position="522"/>
        <end position="525"/>
    </location>
</feature>
<feature type="strand" evidence="18">
    <location>
        <begin position="528"/>
        <end position="531"/>
    </location>
</feature>
<feature type="helix" evidence="16">
    <location>
        <begin position="539"/>
        <end position="542"/>
    </location>
</feature>
<feature type="strand" evidence="16">
    <location>
        <begin position="547"/>
        <end position="550"/>
    </location>
</feature>
<feature type="strand" evidence="16">
    <location>
        <begin position="556"/>
        <end position="561"/>
    </location>
</feature>
<feature type="helix" evidence="16">
    <location>
        <begin position="565"/>
        <end position="577"/>
    </location>
</feature>
<feature type="turn" evidence="16">
    <location>
        <begin position="578"/>
        <end position="580"/>
    </location>
</feature>
<feature type="strand" evidence="16">
    <location>
        <begin position="583"/>
        <end position="587"/>
    </location>
</feature>
<feature type="helix" evidence="16">
    <location>
        <begin position="591"/>
        <end position="596"/>
    </location>
</feature>
<feature type="helix" evidence="16">
    <location>
        <begin position="599"/>
        <end position="605"/>
    </location>
</feature>
<feature type="strand" evidence="16">
    <location>
        <begin position="608"/>
        <end position="610"/>
    </location>
</feature>
<feature type="strand" evidence="16">
    <location>
        <begin position="612"/>
        <end position="615"/>
    </location>
</feature>
<feature type="helix" evidence="16">
    <location>
        <begin position="623"/>
        <end position="625"/>
    </location>
</feature>
<feature type="strand" evidence="16">
    <location>
        <begin position="628"/>
        <end position="631"/>
    </location>
</feature>
<feature type="helix" evidence="16">
    <location>
        <begin position="642"/>
        <end position="648"/>
    </location>
</feature>
<feature type="helix" evidence="16">
    <location>
        <begin position="653"/>
        <end position="667"/>
    </location>
</feature>
<accession>P23254</accession>
<accession>D6W478</accession>
<comment type="function">
    <text evidence="7">Catalyzes the transfer of a two-carbon ketol group from a ketose donor to an aldose acceptor, via a covalent intermediate with the cofactor thiamine pyrophosphate.</text>
</comment>
<comment type="catalytic activity">
    <reaction evidence="5 7 8">
        <text>D-sedoheptulose 7-phosphate + D-glyceraldehyde 3-phosphate = aldehydo-D-ribose 5-phosphate + D-xylulose 5-phosphate</text>
        <dbReference type="Rhea" id="RHEA:10508"/>
        <dbReference type="ChEBI" id="CHEBI:57483"/>
        <dbReference type="ChEBI" id="CHEBI:57737"/>
        <dbReference type="ChEBI" id="CHEBI:58273"/>
        <dbReference type="ChEBI" id="CHEBI:59776"/>
        <dbReference type="EC" id="2.2.1.1"/>
    </reaction>
</comment>
<comment type="cofactor">
    <cofactor evidence="4">
        <name>Mg(2+)</name>
        <dbReference type="ChEBI" id="CHEBI:18420"/>
    </cofactor>
    <cofactor evidence="4">
        <name>Ca(2+)</name>
        <dbReference type="ChEBI" id="CHEBI:29108"/>
    </cofactor>
    <cofactor evidence="4">
        <name>Mn(2+)</name>
        <dbReference type="ChEBI" id="CHEBI:29035"/>
    </cofactor>
    <cofactor evidence="4">
        <name>Co(2+)</name>
        <dbReference type="ChEBI" id="CHEBI:48828"/>
    </cofactor>
    <text evidence="4">Binds 1 Mg(2+) ion per subunit. Can also utilize other divalent metal cations, such as Ca(2+), Mn(2+) and Co(2+).</text>
</comment>
<comment type="cofactor">
    <cofactor evidence="4">
        <name>thiamine diphosphate</name>
        <dbReference type="ChEBI" id="CHEBI:58937"/>
    </cofactor>
    <text evidence="4">Binds 1 thiamine pyrophosphate per subunit.</text>
</comment>
<comment type="subunit">
    <text evidence="1 5 6 8 10">Homodimer.</text>
</comment>
<comment type="interaction">
    <interactant intactId="EBI-19291">
        <id>P23254</id>
    </interactant>
    <interactant intactId="EBI-16219">
        <id>P39940</id>
        <label>RSP5</label>
    </interactant>
    <organismsDiffer>false</organismsDiffer>
    <experiments>2</experiments>
</comment>
<comment type="interaction">
    <interactant intactId="EBI-19291">
        <id>P23254</id>
    </interactant>
    <interactant intactId="EBI-19297">
        <id>P33315</id>
        <label>TKL2</label>
    </interactant>
    <organismsDiffer>false</organismsDiffer>
    <experiments>4</experiments>
</comment>
<comment type="miscellaneous">
    <text evidence="2">Present with 40300 molecules/cell in log phase SD medium.</text>
</comment>
<comment type="similarity">
    <text evidence="11">Belongs to the transketolase family.</text>
</comment>
<organism>
    <name type="scientific">Saccharomyces cerevisiae (strain ATCC 204508 / S288c)</name>
    <name type="common">Baker's yeast</name>
    <dbReference type="NCBI Taxonomy" id="559292"/>
    <lineage>
        <taxon>Eukaryota</taxon>
        <taxon>Fungi</taxon>
        <taxon>Dikarya</taxon>
        <taxon>Ascomycota</taxon>
        <taxon>Saccharomycotina</taxon>
        <taxon>Saccharomycetes</taxon>
        <taxon>Saccharomycetales</taxon>
        <taxon>Saccharomycetaceae</taxon>
        <taxon>Saccharomyces</taxon>
    </lineage>
</organism>
<gene>
    <name type="primary">TKL1</name>
    <name type="ordered locus">YPR074C</name>
    <name type="ORF">YP9499.29C</name>
</gene>
<keyword id="KW-0002">3D-structure</keyword>
<keyword id="KW-0106">Calcium</keyword>
<keyword id="KW-0903">Direct protein sequencing</keyword>
<keyword id="KW-1017">Isopeptide bond</keyword>
<keyword id="KW-0460">Magnesium</keyword>
<keyword id="KW-0479">Metal-binding</keyword>
<keyword id="KW-0597">Phosphoprotein</keyword>
<keyword id="KW-1185">Reference proteome</keyword>
<keyword id="KW-0786">Thiamine pyrophosphate</keyword>
<keyword id="KW-0808">Transferase</keyword>
<keyword id="KW-0832">Ubl conjugation</keyword>
<sequence>MTQFTDIDKLAVSTIRILAVDTVSKANSGHPGAPLGMAPAAHVLWSQMRMNPTNPDWINRDRFVLSNGHAVALLYSMLHLTGYDLSIEDLKQFRQLGSRTPGHPEFELPGVEVTTGPLGQGISNAVGMAMAQANLAATYNKPGFTLSDNYTYVFLGDGCLQEGISSEASSLAGHLKLGNLIAIYDDNKITIDGATSISFDEDVAKRYEAYGWEVLYVENGNEDLAGIAKAIAQAKLSKDKPTLIKMTTTIGYGSLHAGSHSVHGAPLKADDVKQLKSKFGFNPDKSFVVPQEVYDHYQKTILKPGVEANNKWNKLFSEYQKKFPELGAELARRLSGQLPANWESKLPTYTAKDSAVATRKLSETVLEDVYNQLPELIGGSADLTPSNLTRWKEALDFQPPSSGSGNYSGRYIRYGIREHAMGAIMNGISAFGANYKPYGGTFLNFVSYAAGAVRLSALSGHPVIWVATHDSIGVGEDGPTHQPIETLAHFRSLPNIQVWRPADGNEVSAAYKNSLESKHTPSIIALSRQNLPQLEGSSIESASKGGYVLQDVANPDIILVATGSEVSLSVEAAKTLAAKNIKARVVSLPDFFTFDKQPLEYRLSVLPDNVPIMSVEVLATTCWGKYAHQSFGIDRFGASGKAPEVFKFFGFTPEGVAERAQKTIAFYKGDKLISPLKKAF</sequence>